<organism>
    <name type="scientific">Francisella philomiragia subsp. philomiragia (strain ATCC 25017 / CCUG 19701 / FSC 153 / O#319-036)</name>
    <dbReference type="NCBI Taxonomy" id="484022"/>
    <lineage>
        <taxon>Bacteria</taxon>
        <taxon>Pseudomonadati</taxon>
        <taxon>Pseudomonadota</taxon>
        <taxon>Gammaproteobacteria</taxon>
        <taxon>Thiotrichales</taxon>
        <taxon>Francisellaceae</taxon>
        <taxon>Francisella</taxon>
    </lineage>
</organism>
<sequence>MRKLFLDAFKHEKLEKPPIWIMRQAGRYLPEYRAVRSKFENFMDMCRNADACCEVALHPLERYDLDAAIVFSDILTIPEAMGMDLKFIKGVGPVFSDPIESEKDLNRLKSAEDSVGDLEYVYNAVRTTKAAINVPLIGFTGSPWTLAAYMVEGSGSKQFSKLRKMMYANPQLMHALLQRLADITVIYLLEQVKAGASSLMIFDTWGGILPLEQYKEFSLKYMEYIAKNVKQKSNVPVVFFTKGGSNFFEELKDKSCDGVGVDWNVTLDQARHRIGVGKVLQGNFDPAFLYGTSDSIRNTVKKNMEFIQSDKLNNYIVNLGHGIYPDINPDNVKIMVDAIREFSV</sequence>
<dbReference type="EC" id="4.1.1.37" evidence="1"/>
<dbReference type="EMBL" id="CP000937">
    <property type="protein sequence ID" value="ABZ87168.1"/>
    <property type="molecule type" value="Genomic_DNA"/>
</dbReference>
<dbReference type="SMR" id="B0TWR0"/>
<dbReference type="KEGG" id="fph:Fphi_0945"/>
<dbReference type="eggNOG" id="COG0407">
    <property type="taxonomic scope" value="Bacteria"/>
</dbReference>
<dbReference type="HOGENOM" id="CLU_040933_0_0_6"/>
<dbReference type="UniPathway" id="UPA00251">
    <property type="reaction ID" value="UER00321"/>
</dbReference>
<dbReference type="GO" id="GO:0005829">
    <property type="term" value="C:cytosol"/>
    <property type="evidence" value="ECO:0007669"/>
    <property type="project" value="TreeGrafter"/>
</dbReference>
<dbReference type="GO" id="GO:0004853">
    <property type="term" value="F:uroporphyrinogen decarboxylase activity"/>
    <property type="evidence" value="ECO:0007669"/>
    <property type="project" value="UniProtKB-UniRule"/>
</dbReference>
<dbReference type="GO" id="GO:0006782">
    <property type="term" value="P:protoporphyrinogen IX biosynthetic process"/>
    <property type="evidence" value="ECO:0007669"/>
    <property type="project" value="UniProtKB-UniRule"/>
</dbReference>
<dbReference type="CDD" id="cd00717">
    <property type="entry name" value="URO-D"/>
    <property type="match status" value="1"/>
</dbReference>
<dbReference type="FunFam" id="3.20.20.210:FF:000008">
    <property type="entry name" value="Uroporphyrinogen decarboxylase"/>
    <property type="match status" value="1"/>
</dbReference>
<dbReference type="Gene3D" id="3.20.20.210">
    <property type="match status" value="1"/>
</dbReference>
<dbReference type="HAMAP" id="MF_00218">
    <property type="entry name" value="URO_D"/>
    <property type="match status" value="1"/>
</dbReference>
<dbReference type="InterPro" id="IPR038071">
    <property type="entry name" value="UROD/MetE-like_sf"/>
</dbReference>
<dbReference type="InterPro" id="IPR006361">
    <property type="entry name" value="Uroporphyrinogen_deCO2ase_HemE"/>
</dbReference>
<dbReference type="InterPro" id="IPR000257">
    <property type="entry name" value="Uroporphyrinogen_deCOase"/>
</dbReference>
<dbReference type="NCBIfam" id="TIGR01464">
    <property type="entry name" value="hemE"/>
    <property type="match status" value="1"/>
</dbReference>
<dbReference type="PANTHER" id="PTHR21091">
    <property type="entry name" value="METHYLTETRAHYDROFOLATE:HOMOCYSTEINE METHYLTRANSFERASE RELATED"/>
    <property type="match status" value="1"/>
</dbReference>
<dbReference type="PANTHER" id="PTHR21091:SF169">
    <property type="entry name" value="UROPORPHYRINOGEN DECARBOXYLASE"/>
    <property type="match status" value="1"/>
</dbReference>
<dbReference type="Pfam" id="PF01208">
    <property type="entry name" value="URO-D"/>
    <property type="match status" value="1"/>
</dbReference>
<dbReference type="SUPFAM" id="SSF51726">
    <property type="entry name" value="UROD/MetE-like"/>
    <property type="match status" value="1"/>
</dbReference>
<dbReference type="PROSITE" id="PS00906">
    <property type="entry name" value="UROD_1"/>
    <property type="match status" value="1"/>
</dbReference>
<dbReference type="PROSITE" id="PS00907">
    <property type="entry name" value="UROD_2"/>
    <property type="match status" value="1"/>
</dbReference>
<name>DCUP_FRAP2</name>
<gene>
    <name evidence="1" type="primary">hemE</name>
    <name type="ordered locus">Fphi_0945</name>
</gene>
<comment type="function">
    <text evidence="1">Catalyzes the decarboxylation of four acetate groups of uroporphyrinogen-III to yield coproporphyrinogen-III.</text>
</comment>
<comment type="catalytic activity">
    <reaction evidence="1">
        <text>uroporphyrinogen III + 4 H(+) = coproporphyrinogen III + 4 CO2</text>
        <dbReference type="Rhea" id="RHEA:19865"/>
        <dbReference type="ChEBI" id="CHEBI:15378"/>
        <dbReference type="ChEBI" id="CHEBI:16526"/>
        <dbReference type="ChEBI" id="CHEBI:57308"/>
        <dbReference type="ChEBI" id="CHEBI:57309"/>
        <dbReference type="EC" id="4.1.1.37"/>
    </reaction>
</comment>
<comment type="pathway">
    <text evidence="1">Porphyrin-containing compound metabolism; protoporphyrin-IX biosynthesis; coproporphyrinogen-III from 5-aminolevulinate: step 4/4.</text>
</comment>
<comment type="subunit">
    <text evidence="1">Homodimer.</text>
</comment>
<comment type="subcellular location">
    <subcellularLocation>
        <location evidence="1">Cytoplasm</location>
    </subcellularLocation>
</comment>
<comment type="similarity">
    <text evidence="1">Belongs to the uroporphyrinogen decarboxylase family.</text>
</comment>
<evidence type="ECO:0000255" key="1">
    <source>
        <dbReference type="HAMAP-Rule" id="MF_00218"/>
    </source>
</evidence>
<protein>
    <recommendedName>
        <fullName evidence="1">Uroporphyrinogen decarboxylase</fullName>
        <shortName evidence="1">UPD</shortName>
        <shortName evidence="1">URO-D</shortName>
        <ecNumber evidence="1">4.1.1.37</ecNumber>
    </recommendedName>
</protein>
<feature type="chain" id="PRO_1000078074" description="Uroporphyrinogen decarboxylase">
    <location>
        <begin position="1"/>
        <end position="344"/>
    </location>
</feature>
<feature type="binding site" evidence="1">
    <location>
        <begin position="23"/>
        <end position="27"/>
    </location>
    <ligand>
        <name>substrate</name>
    </ligand>
</feature>
<feature type="binding site" evidence="1">
    <location>
        <position position="73"/>
    </location>
    <ligand>
        <name>substrate</name>
    </ligand>
</feature>
<feature type="binding site" evidence="1">
    <location>
        <position position="149"/>
    </location>
    <ligand>
        <name>substrate</name>
    </ligand>
</feature>
<feature type="binding site" evidence="1">
    <location>
        <position position="204"/>
    </location>
    <ligand>
        <name>substrate</name>
    </ligand>
</feature>
<feature type="binding site" evidence="1">
    <location>
        <position position="321"/>
    </location>
    <ligand>
        <name>substrate</name>
    </ligand>
</feature>
<feature type="site" description="Transition state stabilizer" evidence="1">
    <location>
        <position position="73"/>
    </location>
</feature>
<accession>B0TWR0</accession>
<keyword id="KW-0963">Cytoplasm</keyword>
<keyword id="KW-0210">Decarboxylase</keyword>
<keyword id="KW-0456">Lyase</keyword>
<keyword id="KW-0627">Porphyrin biosynthesis</keyword>
<proteinExistence type="inferred from homology"/>
<reference key="1">
    <citation type="submission" date="2007-12" db="EMBL/GenBank/DDBJ databases">
        <title>Complete sequence of chromosome of Francisella philomiragia subsp. philomiragia ATCC 25017.</title>
        <authorList>
            <consortium name="US DOE Joint Genome Institute"/>
            <person name="Copeland A."/>
            <person name="Lucas S."/>
            <person name="Lapidus A."/>
            <person name="Barry K."/>
            <person name="Detter J.C."/>
            <person name="Glavina del Rio T."/>
            <person name="Hammon N."/>
            <person name="Israni S."/>
            <person name="Dalin E."/>
            <person name="Tice H."/>
            <person name="Pitluck S."/>
            <person name="Chain P."/>
            <person name="Malfatti S."/>
            <person name="Shin M."/>
            <person name="Vergez L."/>
            <person name="Schmutz J."/>
            <person name="Larimer F."/>
            <person name="Land M."/>
            <person name="Hauser L."/>
            <person name="Richardson P."/>
        </authorList>
    </citation>
    <scope>NUCLEOTIDE SEQUENCE [LARGE SCALE GENOMIC DNA]</scope>
    <source>
        <strain>ATCC 25017 / CCUG 19701 / FSC 153 / O#319-036</strain>
    </source>
</reference>